<name>AROA_PERMH</name>
<keyword id="KW-0028">Amino-acid biosynthesis</keyword>
<keyword id="KW-0057">Aromatic amino acid biosynthesis</keyword>
<keyword id="KW-0963">Cytoplasm</keyword>
<keyword id="KW-1185">Reference proteome</keyword>
<keyword id="KW-0808">Transferase</keyword>
<proteinExistence type="inferred from homology"/>
<sequence>MEKEISKVSRIKGELRVPSDKSISHRSIILTSLADGVSVVKNFLKAGDTLTTLNVYRKLGVSIIEEKGVLKIKGVNLKGFKEPEDILDMGNSGTTTRLTLGLLSGQEFFSALTGDDSLRQRPMGRVADPLRSMGAKIDGRQDGKLLPLSVRGSSLKGIQFYNKRSSAQVKSALLIAGLLAEGKTKVTEPYISRDHTEKMLDAMGADIHIERDDEYSVTISGSKKLEGIEIDVPADPSSAAFFAAAAVLIPDSELLLKDVLINPTRDGFFRKLKEMGGDIRYTNIREKAKEPVADIYVRYSPDLKGIRIKKEDVPSMVDEIPLLSIVATQAEGETIITGAEELRVKESDRIKAVVENLKNLGIDVEELPDGMVIKGKQKVKGGVVDSYKDHRIAMGFSILGLISEEGIKIKDADSVFISYPEFYEHLERIISN</sequence>
<gene>
    <name evidence="1" type="primary">aroA</name>
    <name type="ordered locus">PERMA_1722</name>
</gene>
<evidence type="ECO:0000255" key="1">
    <source>
        <dbReference type="HAMAP-Rule" id="MF_00210"/>
    </source>
</evidence>
<reference key="1">
    <citation type="journal article" date="2009" name="J. Bacteriol.">
        <title>Complete and draft genome sequences of six members of the Aquificales.</title>
        <authorList>
            <person name="Reysenbach A.-L."/>
            <person name="Hamamura N."/>
            <person name="Podar M."/>
            <person name="Griffiths E."/>
            <person name="Ferreira S."/>
            <person name="Hochstein R."/>
            <person name="Heidelberg J."/>
            <person name="Johnson J."/>
            <person name="Mead D."/>
            <person name="Pohorille A."/>
            <person name="Sarmiento M."/>
            <person name="Schweighofer K."/>
            <person name="Seshadri R."/>
            <person name="Voytek M.A."/>
        </authorList>
    </citation>
    <scope>NUCLEOTIDE SEQUENCE [LARGE SCALE GENOMIC DNA]</scope>
    <source>
        <strain>DSM 14350 / EX-H1</strain>
    </source>
</reference>
<protein>
    <recommendedName>
        <fullName evidence="1">3-phosphoshikimate 1-carboxyvinyltransferase</fullName>
        <ecNumber evidence="1">2.5.1.19</ecNumber>
    </recommendedName>
    <alternativeName>
        <fullName evidence="1">5-enolpyruvylshikimate-3-phosphate synthase</fullName>
        <shortName evidence="1">EPSP synthase</shortName>
        <shortName evidence="1">EPSPS</shortName>
    </alternativeName>
</protein>
<dbReference type="EC" id="2.5.1.19" evidence="1"/>
<dbReference type="EMBL" id="CP001230">
    <property type="protein sequence ID" value="ACO04095.1"/>
    <property type="molecule type" value="Genomic_DNA"/>
</dbReference>
<dbReference type="RefSeq" id="WP_012676333.1">
    <property type="nucleotide sequence ID" value="NC_012440.1"/>
</dbReference>
<dbReference type="SMR" id="C0QS40"/>
<dbReference type="STRING" id="123214.PERMA_1722"/>
<dbReference type="PaxDb" id="123214-PERMA_1722"/>
<dbReference type="KEGG" id="pmx:PERMA_1722"/>
<dbReference type="eggNOG" id="COG0128">
    <property type="taxonomic scope" value="Bacteria"/>
</dbReference>
<dbReference type="HOGENOM" id="CLU_024321_0_1_0"/>
<dbReference type="OrthoDB" id="9809920at2"/>
<dbReference type="UniPathway" id="UPA00053">
    <property type="reaction ID" value="UER00089"/>
</dbReference>
<dbReference type="Proteomes" id="UP000001366">
    <property type="component" value="Chromosome"/>
</dbReference>
<dbReference type="GO" id="GO:0005737">
    <property type="term" value="C:cytoplasm"/>
    <property type="evidence" value="ECO:0007669"/>
    <property type="project" value="UniProtKB-SubCell"/>
</dbReference>
<dbReference type="GO" id="GO:0003866">
    <property type="term" value="F:3-phosphoshikimate 1-carboxyvinyltransferase activity"/>
    <property type="evidence" value="ECO:0007669"/>
    <property type="project" value="UniProtKB-UniRule"/>
</dbReference>
<dbReference type="GO" id="GO:0008652">
    <property type="term" value="P:amino acid biosynthetic process"/>
    <property type="evidence" value="ECO:0007669"/>
    <property type="project" value="UniProtKB-KW"/>
</dbReference>
<dbReference type="GO" id="GO:0009073">
    <property type="term" value="P:aromatic amino acid family biosynthetic process"/>
    <property type="evidence" value="ECO:0007669"/>
    <property type="project" value="UniProtKB-KW"/>
</dbReference>
<dbReference type="GO" id="GO:0009423">
    <property type="term" value="P:chorismate biosynthetic process"/>
    <property type="evidence" value="ECO:0007669"/>
    <property type="project" value="UniProtKB-UniRule"/>
</dbReference>
<dbReference type="CDD" id="cd01556">
    <property type="entry name" value="EPSP_synthase"/>
    <property type="match status" value="1"/>
</dbReference>
<dbReference type="FunFam" id="3.65.10.10:FF:000005">
    <property type="entry name" value="3-phosphoshikimate 1-carboxyvinyltransferase"/>
    <property type="match status" value="1"/>
</dbReference>
<dbReference type="FunFam" id="3.65.10.10:FF:000006">
    <property type="entry name" value="3-phosphoshikimate 1-carboxyvinyltransferase"/>
    <property type="match status" value="1"/>
</dbReference>
<dbReference type="Gene3D" id="3.65.10.10">
    <property type="entry name" value="Enolpyruvate transferase domain"/>
    <property type="match status" value="2"/>
</dbReference>
<dbReference type="HAMAP" id="MF_00210">
    <property type="entry name" value="EPSP_synth"/>
    <property type="match status" value="1"/>
</dbReference>
<dbReference type="InterPro" id="IPR001986">
    <property type="entry name" value="Enolpyruvate_Tfrase_dom"/>
</dbReference>
<dbReference type="InterPro" id="IPR036968">
    <property type="entry name" value="Enolpyruvate_Tfrase_sf"/>
</dbReference>
<dbReference type="InterPro" id="IPR006264">
    <property type="entry name" value="EPSP_synthase"/>
</dbReference>
<dbReference type="InterPro" id="IPR023193">
    <property type="entry name" value="EPSP_synthase_CS"/>
</dbReference>
<dbReference type="InterPro" id="IPR013792">
    <property type="entry name" value="RNA3'P_cycl/enolpyr_Trfase_a/b"/>
</dbReference>
<dbReference type="NCBIfam" id="TIGR01356">
    <property type="entry name" value="aroA"/>
    <property type="match status" value="1"/>
</dbReference>
<dbReference type="PANTHER" id="PTHR21090">
    <property type="entry name" value="AROM/DEHYDROQUINATE SYNTHASE"/>
    <property type="match status" value="1"/>
</dbReference>
<dbReference type="PANTHER" id="PTHR21090:SF5">
    <property type="entry name" value="PENTAFUNCTIONAL AROM POLYPEPTIDE"/>
    <property type="match status" value="1"/>
</dbReference>
<dbReference type="Pfam" id="PF00275">
    <property type="entry name" value="EPSP_synthase"/>
    <property type="match status" value="1"/>
</dbReference>
<dbReference type="PIRSF" id="PIRSF000505">
    <property type="entry name" value="EPSPS"/>
    <property type="match status" value="1"/>
</dbReference>
<dbReference type="SUPFAM" id="SSF55205">
    <property type="entry name" value="EPT/RTPC-like"/>
    <property type="match status" value="1"/>
</dbReference>
<dbReference type="PROSITE" id="PS00104">
    <property type="entry name" value="EPSP_SYNTHASE_1"/>
    <property type="match status" value="1"/>
</dbReference>
<dbReference type="PROSITE" id="PS00885">
    <property type="entry name" value="EPSP_SYNTHASE_2"/>
    <property type="match status" value="1"/>
</dbReference>
<organism>
    <name type="scientific">Persephonella marina (strain DSM 14350 / EX-H1)</name>
    <dbReference type="NCBI Taxonomy" id="123214"/>
    <lineage>
        <taxon>Bacteria</taxon>
        <taxon>Pseudomonadati</taxon>
        <taxon>Aquificota</taxon>
        <taxon>Aquificia</taxon>
        <taxon>Aquificales</taxon>
        <taxon>Hydrogenothermaceae</taxon>
        <taxon>Persephonella</taxon>
    </lineage>
</organism>
<feature type="chain" id="PRO_1000124695" description="3-phosphoshikimate 1-carboxyvinyltransferase">
    <location>
        <begin position="1"/>
        <end position="432"/>
    </location>
</feature>
<feature type="active site" description="Proton acceptor" evidence="1">
    <location>
        <position position="318"/>
    </location>
</feature>
<feature type="binding site" evidence="1">
    <location>
        <position position="21"/>
    </location>
    <ligand>
        <name>3-phosphoshikimate</name>
        <dbReference type="ChEBI" id="CHEBI:145989"/>
    </ligand>
</feature>
<feature type="binding site" evidence="1">
    <location>
        <position position="21"/>
    </location>
    <ligand>
        <name>phosphoenolpyruvate</name>
        <dbReference type="ChEBI" id="CHEBI:58702"/>
    </ligand>
</feature>
<feature type="binding site" evidence="1">
    <location>
        <position position="22"/>
    </location>
    <ligand>
        <name>3-phosphoshikimate</name>
        <dbReference type="ChEBI" id="CHEBI:145989"/>
    </ligand>
</feature>
<feature type="binding site" evidence="1">
    <location>
        <position position="26"/>
    </location>
    <ligand>
        <name>3-phosphoshikimate</name>
        <dbReference type="ChEBI" id="CHEBI:145989"/>
    </ligand>
</feature>
<feature type="binding site" evidence="1">
    <location>
        <position position="93"/>
    </location>
    <ligand>
        <name>phosphoenolpyruvate</name>
        <dbReference type="ChEBI" id="CHEBI:58702"/>
    </ligand>
</feature>
<feature type="binding site" evidence="1">
    <location>
        <position position="121"/>
    </location>
    <ligand>
        <name>phosphoenolpyruvate</name>
        <dbReference type="ChEBI" id="CHEBI:58702"/>
    </ligand>
</feature>
<feature type="binding site" evidence="1">
    <location>
        <position position="166"/>
    </location>
    <ligand>
        <name>3-phosphoshikimate</name>
        <dbReference type="ChEBI" id="CHEBI:145989"/>
    </ligand>
</feature>
<feature type="binding site" evidence="1">
    <location>
        <position position="168"/>
    </location>
    <ligand>
        <name>3-phosphoshikimate</name>
        <dbReference type="ChEBI" id="CHEBI:145989"/>
    </ligand>
</feature>
<feature type="binding site" evidence="1">
    <location>
        <position position="168"/>
    </location>
    <ligand>
        <name>phosphoenolpyruvate</name>
        <dbReference type="ChEBI" id="CHEBI:58702"/>
    </ligand>
</feature>
<feature type="binding site" evidence="1">
    <location>
        <position position="318"/>
    </location>
    <ligand>
        <name>3-phosphoshikimate</name>
        <dbReference type="ChEBI" id="CHEBI:145989"/>
    </ligand>
</feature>
<feature type="binding site" evidence="1">
    <location>
        <position position="345"/>
    </location>
    <ligand>
        <name>3-phosphoshikimate</name>
        <dbReference type="ChEBI" id="CHEBI:145989"/>
    </ligand>
</feature>
<feature type="binding site" evidence="1">
    <location>
        <position position="349"/>
    </location>
    <ligand>
        <name>phosphoenolpyruvate</name>
        <dbReference type="ChEBI" id="CHEBI:58702"/>
    </ligand>
</feature>
<feature type="binding site" evidence="1">
    <location>
        <position position="391"/>
    </location>
    <ligand>
        <name>phosphoenolpyruvate</name>
        <dbReference type="ChEBI" id="CHEBI:58702"/>
    </ligand>
</feature>
<comment type="function">
    <text evidence="1">Catalyzes the transfer of the enolpyruvyl moiety of phosphoenolpyruvate (PEP) to the 5-hydroxyl of shikimate-3-phosphate (S3P) to produce enolpyruvyl shikimate-3-phosphate and inorganic phosphate.</text>
</comment>
<comment type="catalytic activity">
    <reaction evidence="1">
        <text>3-phosphoshikimate + phosphoenolpyruvate = 5-O-(1-carboxyvinyl)-3-phosphoshikimate + phosphate</text>
        <dbReference type="Rhea" id="RHEA:21256"/>
        <dbReference type="ChEBI" id="CHEBI:43474"/>
        <dbReference type="ChEBI" id="CHEBI:57701"/>
        <dbReference type="ChEBI" id="CHEBI:58702"/>
        <dbReference type="ChEBI" id="CHEBI:145989"/>
        <dbReference type="EC" id="2.5.1.19"/>
    </reaction>
    <physiologicalReaction direction="left-to-right" evidence="1">
        <dbReference type="Rhea" id="RHEA:21257"/>
    </physiologicalReaction>
</comment>
<comment type="pathway">
    <text evidence="1">Metabolic intermediate biosynthesis; chorismate biosynthesis; chorismate from D-erythrose 4-phosphate and phosphoenolpyruvate: step 6/7.</text>
</comment>
<comment type="subunit">
    <text evidence="1">Monomer.</text>
</comment>
<comment type="subcellular location">
    <subcellularLocation>
        <location evidence="1">Cytoplasm</location>
    </subcellularLocation>
</comment>
<comment type="similarity">
    <text evidence="1">Belongs to the EPSP synthase family.</text>
</comment>
<accession>C0QS40</accession>